<sequence length="276" mass="29678">MKLCGFEVGLNQPLFLIAGPCVIESLQLQLDTAGVLKEITSKLGLNFIFKSSFDKANRTSGSSFRGPGLEEGLKVLEAVKTQIGVPVLTDVHEYTPIDEVATVVDVLQTPAFLVRQTDFIRNVCAVGKPVNIKKGQFLSPWDMKPVVEKAKSTGNSQILVCERGASFGYNNLVSDMRSLAVMRETGCPVVFDATHSVQLPGAQGGRSGGQREFVPVLARAAVAVGISGLFAETHPDPPNALSDGPNAWPLHTMAMLLETLVELDAVTKKRGFLEQD</sequence>
<accession>Q9PDU0</accession>
<gene>
    <name evidence="1" type="primary">kdsA</name>
    <name type="ordered locus">XF_1289</name>
</gene>
<comment type="catalytic activity">
    <reaction evidence="1">
        <text>D-arabinose 5-phosphate + phosphoenolpyruvate + H2O = 3-deoxy-alpha-D-manno-2-octulosonate-8-phosphate + phosphate</text>
        <dbReference type="Rhea" id="RHEA:14053"/>
        <dbReference type="ChEBI" id="CHEBI:15377"/>
        <dbReference type="ChEBI" id="CHEBI:43474"/>
        <dbReference type="ChEBI" id="CHEBI:57693"/>
        <dbReference type="ChEBI" id="CHEBI:58702"/>
        <dbReference type="ChEBI" id="CHEBI:85985"/>
        <dbReference type="EC" id="2.5.1.55"/>
    </reaction>
</comment>
<comment type="pathway">
    <text evidence="1">Carbohydrate biosynthesis; 3-deoxy-D-manno-octulosonate biosynthesis; 3-deoxy-D-manno-octulosonate from D-ribulose 5-phosphate: step 2/3.</text>
</comment>
<comment type="pathway">
    <text evidence="1">Bacterial outer membrane biogenesis; lipopolysaccharide biosynthesis.</text>
</comment>
<comment type="subcellular location">
    <subcellularLocation>
        <location evidence="1">Cytoplasm</location>
    </subcellularLocation>
</comment>
<comment type="similarity">
    <text evidence="1">Belongs to the KdsA family.</text>
</comment>
<comment type="sequence caution" evidence="2">
    <conflict type="erroneous initiation">
        <sequence resource="EMBL-CDS" id="AAF84098"/>
    </conflict>
</comment>
<name>KDSA_XYLFA</name>
<feature type="chain" id="PRO_0000187175" description="2-dehydro-3-deoxyphosphooctonate aldolase">
    <location>
        <begin position="1"/>
        <end position="276"/>
    </location>
</feature>
<organism>
    <name type="scientific">Xylella fastidiosa (strain 9a5c)</name>
    <dbReference type="NCBI Taxonomy" id="160492"/>
    <lineage>
        <taxon>Bacteria</taxon>
        <taxon>Pseudomonadati</taxon>
        <taxon>Pseudomonadota</taxon>
        <taxon>Gammaproteobacteria</taxon>
        <taxon>Lysobacterales</taxon>
        <taxon>Lysobacteraceae</taxon>
        <taxon>Xylella</taxon>
    </lineage>
</organism>
<protein>
    <recommendedName>
        <fullName evidence="1">2-dehydro-3-deoxyphosphooctonate aldolase</fullName>
        <ecNumber evidence="1">2.5.1.55</ecNumber>
    </recommendedName>
    <alternativeName>
        <fullName evidence="1">3-deoxy-D-manno-octulosonic acid 8-phosphate synthase</fullName>
    </alternativeName>
    <alternativeName>
        <fullName evidence="1">KDO-8-phosphate synthase</fullName>
        <shortName evidence="1">KDO 8-P synthase</shortName>
        <shortName evidence="1">KDOPS</shortName>
    </alternativeName>
    <alternativeName>
        <fullName evidence="1">Phospho-2-dehydro-3-deoxyoctonate aldolase</fullName>
    </alternativeName>
</protein>
<keyword id="KW-0963">Cytoplasm</keyword>
<keyword id="KW-0448">Lipopolysaccharide biosynthesis</keyword>
<keyword id="KW-0808">Transferase</keyword>
<reference key="1">
    <citation type="journal article" date="2000" name="Nature">
        <title>The genome sequence of the plant pathogen Xylella fastidiosa.</title>
        <authorList>
            <person name="Simpson A.J.G."/>
            <person name="Reinach F.C."/>
            <person name="Arruda P."/>
            <person name="Abreu F.A."/>
            <person name="Acencio M."/>
            <person name="Alvarenga R."/>
            <person name="Alves L.M.C."/>
            <person name="Araya J.E."/>
            <person name="Baia G.S."/>
            <person name="Baptista C.S."/>
            <person name="Barros M.H."/>
            <person name="Bonaccorsi E.D."/>
            <person name="Bordin S."/>
            <person name="Bove J.M."/>
            <person name="Briones M.R.S."/>
            <person name="Bueno M.R.P."/>
            <person name="Camargo A.A."/>
            <person name="Camargo L.E.A."/>
            <person name="Carraro D.M."/>
            <person name="Carrer H."/>
            <person name="Colauto N.B."/>
            <person name="Colombo C."/>
            <person name="Costa F.F."/>
            <person name="Costa M.C.R."/>
            <person name="Costa-Neto C.M."/>
            <person name="Coutinho L.L."/>
            <person name="Cristofani M."/>
            <person name="Dias-Neto E."/>
            <person name="Docena C."/>
            <person name="El-Dorry H."/>
            <person name="Facincani A.P."/>
            <person name="Ferreira A.J.S."/>
            <person name="Ferreira V.C.A."/>
            <person name="Ferro J.A."/>
            <person name="Fraga J.S."/>
            <person name="Franca S.C."/>
            <person name="Franco M.C."/>
            <person name="Frohme M."/>
            <person name="Furlan L.R."/>
            <person name="Garnier M."/>
            <person name="Goldman G.H."/>
            <person name="Goldman M.H.S."/>
            <person name="Gomes S.L."/>
            <person name="Gruber A."/>
            <person name="Ho P.L."/>
            <person name="Hoheisel J.D."/>
            <person name="Junqueira M.L."/>
            <person name="Kemper E.L."/>
            <person name="Kitajima J.P."/>
            <person name="Krieger J.E."/>
            <person name="Kuramae E.E."/>
            <person name="Laigret F."/>
            <person name="Lambais M.R."/>
            <person name="Leite L.C.C."/>
            <person name="Lemos E.G.M."/>
            <person name="Lemos M.V.F."/>
            <person name="Lopes S.A."/>
            <person name="Lopes C.R."/>
            <person name="Machado J.A."/>
            <person name="Machado M.A."/>
            <person name="Madeira A.M.B.N."/>
            <person name="Madeira H.M.F."/>
            <person name="Marino C.L."/>
            <person name="Marques M.V."/>
            <person name="Martins E.A.L."/>
            <person name="Martins E.M.F."/>
            <person name="Matsukuma A.Y."/>
            <person name="Menck C.F.M."/>
            <person name="Miracca E.C."/>
            <person name="Miyaki C.Y."/>
            <person name="Monteiro-Vitorello C.B."/>
            <person name="Moon D.H."/>
            <person name="Nagai M.A."/>
            <person name="Nascimento A.L.T.O."/>
            <person name="Netto L.E.S."/>
            <person name="Nhani A. Jr."/>
            <person name="Nobrega F.G."/>
            <person name="Nunes L.R."/>
            <person name="Oliveira M.A."/>
            <person name="de Oliveira M.C."/>
            <person name="de Oliveira R.C."/>
            <person name="Palmieri D.A."/>
            <person name="Paris A."/>
            <person name="Peixoto B.R."/>
            <person name="Pereira G.A.G."/>
            <person name="Pereira H.A. Jr."/>
            <person name="Pesquero J.B."/>
            <person name="Quaggio R.B."/>
            <person name="Roberto P.G."/>
            <person name="Rodrigues V."/>
            <person name="de Rosa A.J.M."/>
            <person name="de Rosa V.E. Jr."/>
            <person name="de Sa R.G."/>
            <person name="Santelli R.V."/>
            <person name="Sawasaki H.E."/>
            <person name="da Silva A.C.R."/>
            <person name="da Silva A.M."/>
            <person name="da Silva F.R."/>
            <person name="Silva W.A. Jr."/>
            <person name="da Silveira J.F."/>
            <person name="Silvestri M.L.Z."/>
            <person name="Siqueira W.J."/>
            <person name="de Souza A.A."/>
            <person name="de Souza A.P."/>
            <person name="Terenzi M.F."/>
            <person name="Truffi D."/>
            <person name="Tsai S.M."/>
            <person name="Tsuhako M.H."/>
            <person name="Vallada H."/>
            <person name="Van Sluys M.A."/>
            <person name="Verjovski-Almeida S."/>
            <person name="Vettore A.L."/>
            <person name="Zago M.A."/>
            <person name="Zatz M."/>
            <person name="Meidanis J."/>
            <person name="Setubal J.C."/>
        </authorList>
    </citation>
    <scope>NUCLEOTIDE SEQUENCE [LARGE SCALE GENOMIC DNA]</scope>
    <source>
        <strain>9a5c</strain>
    </source>
</reference>
<evidence type="ECO:0000255" key="1">
    <source>
        <dbReference type="HAMAP-Rule" id="MF_00056"/>
    </source>
</evidence>
<evidence type="ECO:0000305" key="2"/>
<proteinExistence type="inferred from homology"/>
<dbReference type="EC" id="2.5.1.55" evidence="1"/>
<dbReference type="EMBL" id="AE003849">
    <property type="protein sequence ID" value="AAF84098.1"/>
    <property type="status" value="ALT_INIT"/>
    <property type="molecule type" value="Genomic_DNA"/>
</dbReference>
<dbReference type="PIR" id="D82700">
    <property type="entry name" value="D82700"/>
</dbReference>
<dbReference type="RefSeq" id="WP_010893795.1">
    <property type="nucleotide sequence ID" value="NC_002488.3"/>
</dbReference>
<dbReference type="SMR" id="Q9PDU0"/>
<dbReference type="STRING" id="160492.XF_1289"/>
<dbReference type="KEGG" id="xfa:XF_1289"/>
<dbReference type="eggNOG" id="COG2877">
    <property type="taxonomic scope" value="Bacteria"/>
</dbReference>
<dbReference type="HOGENOM" id="CLU_036666_0_0_6"/>
<dbReference type="UniPathway" id="UPA00030"/>
<dbReference type="UniPathway" id="UPA00357">
    <property type="reaction ID" value="UER00474"/>
</dbReference>
<dbReference type="Proteomes" id="UP000000812">
    <property type="component" value="Chromosome"/>
</dbReference>
<dbReference type="GO" id="GO:0005737">
    <property type="term" value="C:cytoplasm"/>
    <property type="evidence" value="ECO:0007669"/>
    <property type="project" value="UniProtKB-SubCell"/>
</dbReference>
<dbReference type="GO" id="GO:0008676">
    <property type="term" value="F:3-deoxy-8-phosphooctulonate synthase activity"/>
    <property type="evidence" value="ECO:0007669"/>
    <property type="project" value="UniProtKB-UniRule"/>
</dbReference>
<dbReference type="GO" id="GO:0019294">
    <property type="term" value="P:keto-3-deoxy-D-manno-octulosonic acid biosynthetic process"/>
    <property type="evidence" value="ECO:0007669"/>
    <property type="project" value="UniProtKB-UniRule"/>
</dbReference>
<dbReference type="Gene3D" id="3.20.20.70">
    <property type="entry name" value="Aldolase class I"/>
    <property type="match status" value="1"/>
</dbReference>
<dbReference type="HAMAP" id="MF_00056">
    <property type="entry name" value="KDO8P_synth"/>
    <property type="match status" value="1"/>
</dbReference>
<dbReference type="InterPro" id="IPR013785">
    <property type="entry name" value="Aldolase_TIM"/>
</dbReference>
<dbReference type="InterPro" id="IPR006218">
    <property type="entry name" value="DAHP1/KDSA"/>
</dbReference>
<dbReference type="InterPro" id="IPR006269">
    <property type="entry name" value="KDO8P_synthase"/>
</dbReference>
<dbReference type="NCBIfam" id="TIGR01362">
    <property type="entry name" value="KDO8P_synth"/>
    <property type="match status" value="1"/>
</dbReference>
<dbReference type="NCBIfam" id="NF003543">
    <property type="entry name" value="PRK05198.1"/>
    <property type="match status" value="1"/>
</dbReference>
<dbReference type="PANTHER" id="PTHR21057">
    <property type="entry name" value="PHOSPHO-2-DEHYDRO-3-DEOXYHEPTONATE ALDOLASE"/>
    <property type="match status" value="1"/>
</dbReference>
<dbReference type="Pfam" id="PF00793">
    <property type="entry name" value="DAHP_synth_1"/>
    <property type="match status" value="1"/>
</dbReference>
<dbReference type="SUPFAM" id="SSF51569">
    <property type="entry name" value="Aldolase"/>
    <property type="match status" value="1"/>
</dbReference>